<name>Y2027_ARATH</name>
<protein>
    <recommendedName>
        <fullName>Inactive receptor-like serine/threonine-protein kinase At2g40270</fullName>
    </recommendedName>
</protein>
<comment type="subcellular location">
    <subcellularLocation>
        <location evidence="1">Cell membrane</location>
        <topology evidence="1">Single-pass type I membrane protein</topology>
    </subcellularLocation>
</comment>
<comment type="alternative products">
    <event type="alternative splicing"/>
    <isoform>
        <id>Q9SIZ4-1</id>
        <name>1</name>
        <sequence type="displayed"/>
    </isoform>
    <isoform>
        <id>Q9SIZ4-2</id>
        <name>2</name>
        <sequence type="described" ref="VSP_040372"/>
    </isoform>
</comment>
<comment type="domain">
    <text>The protein kinase domain is predicted to be catalytically inactive.</text>
</comment>
<comment type="similarity">
    <text evidence="3">Belongs to the protein kinase superfamily. Ser/Thr protein kinase family.</text>
</comment>
<comment type="sequence caution" evidence="6">
    <conflict type="erroneous initiation">
        <sequence resource="EMBL-CDS" id="AAD25942"/>
    </conflict>
    <text>Truncated N-terminus.</text>
</comment>
<feature type="signal peptide" evidence="2">
    <location>
        <begin position="1"/>
        <end position="23"/>
    </location>
</feature>
<feature type="chain" id="PRO_0000403349" description="Inactive receptor-like serine/threonine-protein kinase At2g40270">
    <location>
        <begin position="24"/>
        <end position="489"/>
    </location>
</feature>
<feature type="topological domain" description="Extracellular" evidence="2">
    <location>
        <begin position="24"/>
        <end position="139"/>
    </location>
</feature>
<feature type="transmembrane region" description="Helical" evidence="2">
    <location>
        <begin position="140"/>
        <end position="160"/>
    </location>
</feature>
<feature type="topological domain" description="Cytoplasmic" evidence="2">
    <location>
        <begin position="161"/>
        <end position="489"/>
    </location>
</feature>
<feature type="domain" description="Protein kinase" evidence="3">
    <location>
        <begin position="200"/>
        <end position="460"/>
    </location>
</feature>
<feature type="region of interest" description="Disordered" evidence="4">
    <location>
        <begin position="67"/>
        <end position="130"/>
    </location>
</feature>
<feature type="compositionally biased region" description="Low complexity" evidence="4">
    <location>
        <begin position="81"/>
        <end position="90"/>
    </location>
</feature>
<feature type="compositionally biased region" description="Polar residues" evidence="4">
    <location>
        <begin position="99"/>
        <end position="116"/>
    </location>
</feature>
<feature type="compositionally biased region" description="Low complexity" evidence="4">
    <location>
        <begin position="117"/>
        <end position="130"/>
    </location>
</feature>
<feature type="splice variant" id="VSP_040372" description="In isoform 2." evidence="5">
    <original>KAFGFHRK</original>
    <variation>R</variation>
    <location>
        <begin position="52"/>
        <end position="59"/>
    </location>
</feature>
<feature type="sequence conflict" description="In Ref. 5; BX820203." evidence="6" ref="5">
    <original>N</original>
    <variation>S</variation>
    <location>
        <position position="77"/>
    </location>
</feature>
<feature type="sequence conflict" description="In Ref. 5; BX820203." evidence="6" ref="5">
    <original>K</original>
    <variation>E</variation>
    <location>
        <position position="109"/>
    </location>
</feature>
<feature type="sequence conflict" description="In Ref. 5; BX820203." evidence="6" ref="5">
    <original>N</original>
    <variation>D</variation>
    <location>
        <position position="132"/>
    </location>
</feature>
<feature type="sequence conflict" description="In Ref. 5; BX820203." evidence="6" ref="5">
    <original>T</original>
    <variation>A</variation>
    <location>
        <position position="167"/>
    </location>
</feature>
<feature type="sequence conflict" description="In Ref. 5; BX820203." evidence="6" ref="5">
    <original>K</original>
    <variation>R</variation>
    <location>
        <position position="181"/>
    </location>
</feature>
<feature type="sequence conflict" description="In Ref. 5; BX820203." evidence="6" ref="5">
    <original>K</original>
    <variation>E</variation>
    <location>
        <position position="239"/>
    </location>
</feature>
<feature type="sequence conflict" description="In Ref. 5; BX820203." evidence="6" ref="5">
    <original>F</original>
    <variation>L</variation>
    <location>
        <position position="411"/>
    </location>
</feature>
<sequence>MLFKMRSFVAFVLLLSWFGSCCSLKDQAVDFLKSEDSLKKDLSSDEDSTYLKAFGFHRKTLVRNPYKDLPSRKDRKNRVVAATTTPSSSPEPAPKHVSTKASTVSEPQKRSSTQDVSPSPSAPLANSPIPRNSHSSVPLVVGCVGGAFFLLLVATGLYFFTSKAGKTVNPWRTGLSGQLQKVFVTGIPVLKRSEIEAACEDFSNVIGSCPIGKLFKGTLSSGVEIAVASFATTTAKDWKDSTEIHFRKKIEMLSKINHKNFANLLGYCEEKEPFTRILIFEYAPNGSLFEHLHYKESEHLDWGMRLRIAMGLAYCLDHMHQLNPPIAHTNLVSSSLQLTEDYAVKVSDFSFGSSETETNINNNTVIDTHISALNPEDNIYSFGLLLFEMITGKLIESVNKPDSVDSSLVDFLRGETLAKMVDPTLESYDAKIENIGEVIKSCLRTDPKERPTMQEVTGWLREITGLSPNDATPKLSPLWWAELEVLSTA</sequence>
<organism>
    <name type="scientific">Arabidopsis thaliana</name>
    <name type="common">Mouse-ear cress</name>
    <dbReference type="NCBI Taxonomy" id="3702"/>
    <lineage>
        <taxon>Eukaryota</taxon>
        <taxon>Viridiplantae</taxon>
        <taxon>Streptophyta</taxon>
        <taxon>Embryophyta</taxon>
        <taxon>Tracheophyta</taxon>
        <taxon>Spermatophyta</taxon>
        <taxon>Magnoliopsida</taxon>
        <taxon>eudicotyledons</taxon>
        <taxon>Gunneridae</taxon>
        <taxon>Pentapetalae</taxon>
        <taxon>rosids</taxon>
        <taxon>malvids</taxon>
        <taxon>Brassicales</taxon>
        <taxon>Brassicaceae</taxon>
        <taxon>Camelineae</taxon>
        <taxon>Arabidopsis</taxon>
    </lineage>
</organism>
<reference key="1">
    <citation type="journal article" date="1999" name="Genome Res.">
        <title>A cluster of ABA-regulated genes on Arabidopsis thaliana BAC T07M07.</title>
        <authorList>
            <person name="Wang M.L."/>
            <person name="Belmonte S."/>
            <person name="Kim U."/>
            <person name="Dolan M."/>
            <person name="Morris J.W."/>
            <person name="Goodman H.M."/>
        </authorList>
    </citation>
    <scope>NUCLEOTIDE SEQUENCE [GENOMIC DNA]</scope>
</reference>
<reference key="2">
    <citation type="journal article" date="1999" name="Nature">
        <title>Sequence and analysis of chromosome 2 of the plant Arabidopsis thaliana.</title>
        <authorList>
            <person name="Lin X."/>
            <person name="Kaul S."/>
            <person name="Rounsley S.D."/>
            <person name="Shea T.P."/>
            <person name="Benito M.-I."/>
            <person name="Town C.D."/>
            <person name="Fujii C.Y."/>
            <person name="Mason T.M."/>
            <person name="Bowman C.L."/>
            <person name="Barnstead M.E."/>
            <person name="Feldblyum T.V."/>
            <person name="Buell C.R."/>
            <person name="Ketchum K.A."/>
            <person name="Lee J.J."/>
            <person name="Ronning C.M."/>
            <person name="Koo H.L."/>
            <person name="Moffat K.S."/>
            <person name="Cronin L.A."/>
            <person name="Shen M."/>
            <person name="Pai G."/>
            <person name="Van Aken S."/>
            <person name="Umayam L."/>
            <person name="Tallon L.J."/>
            <person name="Gill J.E."/>
            <person name="Adams M.D."/>
            <person name="Carrera A.J."/>
            <person name="Creasy T.H."/>
            <person name="Goodman H.M."/>
            <person name="Somerville C.R."/>
            <person name="Copenhaver G.P."/>
            <person name="Preuss D."/>
            <person name="Nierman W.C."/>
            <person name="White O."/>
            <person name="Eisen J.A."/>
            <person name="Salzberg S.L."/>
            <person name="Fraser C.M."/>
            <person name="Venter J.C."/>
        </authorList>
    </citation>
    <scope>NUCLEOTIDE SEQUENCE [LARGE SCALE GENOMIC DNA]</scope>
    <source>
        <strain>cv. Columbia</strain>
    </source>
</reference>
<reference key="3">
    <citation type="journal article" date="2017" name="Plant J.">
        <title>Araport11: a complete reannotation of the Arabidopsis thaliana reference genome.</title>
        <authorList>
            <person name="Cheng C.Y."/>
            <person name="Krishnakumar V."/>
            <person name="Chan A.P."/>
            <person name="Thibaud-Nissen F."/>
            <person name="Schobel S."/>
            <person name="Town C.D."/>
        </authorList>
    </citation>
    <scope>GENOME REANNOTATION</scope>
    <source>
        <strain>cv. Columbia</strain>
    </source>
</reference>
<reference key="4">
    <citation type="journal article" date="2003" name="Science">
        <title>Empirical analysis of transcriptional activity in the Arabidopsis genome.</title>
        <authorList>
            <person name="Yamada K."/>
            <person name="Lim J."/>
            <person name="Dale J.M."/>
            <person name="Chen H."/>
            <person name="Shinn P."/>
            <person name="Palm C.J."/>
            <person name="Southwick A.M."/>
            <person name="Wu H.C."/>
            <person name="Kim C.J."/>
            <person name="Nguyen M."/>
            <person name="Pham P.K."/>
            <person name="Cheuk R.F."/>
            <person name="Karlin-Newmann G."/>
            <person name="Liu S.X."/>
            <person name="Lam B."/>
            <person name="Sakano H."/>
            <person name="Wu T."/>
            <person name="Yu G."/>
            <person name="Miranda M."/>
            <person name="Quach H.L."/>
            <person name="Tripp M."/>
            <person name="Chang C.H."/>
            <person name="Lee J.M."/>
            <person name="Toriumi M.J."/>
            <person name="Chan M.M."/>
            <person name="Tang C.C."/>
            <person name="Onodera C.S."/>
            <person name="Deng J.M."/>
            <person name="Akiyama K."/>
            <person name="Ansari Y."/>
            <person name="Arakawa T."/>
            <person name="Banh J."/>
            <person name="Banno F."/>
            <person name="Bowser L."/>
            <person name="Brooks S.Y."/>
            <person name="Carninci P."/>
            <person name="Chao Q."/>
            <person name="Choy N."/>
            <person name="Enju A."/>
            <person name="Goldsmith A.D."/>
            <person name="Gurjal M."/>
            <person name="Hansen N.F."/>
            <person name="Hayashizaki Y."/>
            <person name="Johnson-Hopson C."/>
            <person name="Hsuan V.W."/>
            <person name="Iida K."/>
            <person name="Karnes M."/>
            <person name="Khan S."/>
            <person name="Koesema E."/>
            <person name="Ishida J."/>
            <person name="Jiang P.X."/>
            <person name="Jones T."/>
            <person name="Kawai J."/>
            <person name="Kamiya A."/>
            <person name="Meyers C."/>
            <person name="Nakajima M."/>
            <person name="Narusaka M."/>
            <person name="Seki M."/>
            <person name="Sakurai T."/>
            <person name="Satou M."/>
            <person name="Tamse R."/>
            <person name="Vaysberg M."/>
            <person name="Wallender E.K."/>
            <person name="Wong C."/>
            <person name="Yamamura Y."/>
            <person name="Yuan S."/>
            <person name="Shinozaki K."/>
            <person name="Davis R.W."/>
            <person name="Theologis A."/>
            <person name="Ecker J.R."/>
        </authorList>
    </citation>
    <scope>NUCLEOTIDE SEQUENCE [LARGE SCALE MRNA] (ISOFORM 1)</scope>
    <source>
        <strain>cv. Columbia</strain>
    </source>
</reference>
<reference key="5">
    <citation type="journal article" date="2004" name="Genome Res.">
        <title>Whole genome sequence comparisons and 'full-length' cDNA sequences: a combined approach to evaluate and improve Arabidopsis genome annotation.</title>
        <authorList>
            <person name="Castelli V."/>
            <person name="Aury J.-M."/>
            <person name="Jaillon O."/>
            <person name="Wincker P."/>
            <person name="Clepet C."/>
            <person name="Menard M."/>
            <person name="Cruaud C."/>
            <person name="Quetier F."/>
            <person name="Scarpelli C."/>
            <person name="Schaechter V."/>
            <person name="Temple G."/>
            <person name="Caboche M."/>
            <person name="Weissenbach J."/>
            <person name="Salanoubat M."/>
        </authorList>
    </citation>
    <scope>NUCLEOTIDE SEQUENCE [LARGE SCALE MRNA] (ISOFORM 2)</scope>
    <source>
        <strain>cv. Columbia</strain>
    </source>
</reference>
<evidence type="ECO:0000250" key="1"/>
<evidence type="ECO:0000255" key="2"/>
<evidence type="ECO:0000255" key="3">
    <source>
        <dbReference type="PROSITE-ProRule" id="PRU00159"/>
    </source>
</evidence>
<evidence type="ECO:0000256" key="4">
    <source>
        <dbReference type="SAM" id="MobiDB-lite"/>
    </source>
</evidence>
<evidence type="ECO:0000303" key="5">
    <source>
    </source>
</evidence>
<evidence type="ECO:0000305" key="6"/>
<keyword id="KW-0025">Alternative splicing</keyword>
<keyword id="KW-1003">Cell membrane</keyword>
<keyword id="KW-0472">Membrane</keyword>
<keyword id="KW-0675">Receptor</keyword>
<keyword id="KW-1185">Reference proteome</keyword>
<keyword id="KW-0732">Signal</keyword>
<keyword id="KW-0812">Transmembrane</keyword>
<keyword id="KW-1133">Transmembrane helix</keyword>
<proteinExistence type="evidence at transcript level"/>
<gene>
    <name type="ordered locus">At2g40270</name>
    <name type="ORF">T3G21</name>
    <name type="ORF">T7M7.19</name>
</gene>
<accession>Q9SIZ4</accession>
<accession>Q3EBJ0</accession>
<accession>Q9XEF4</accession>
<dbReference type="EMBL" id="AF085279">
    <property type="protein sequence ID" value="AAD25942.1"/>
    <property type="status" value="ALT_INIT"/>
    <property type="molecule type" value="Genomic_DNA"/>
</dbReference>
<dbReference type="EMBL" id="AC007020">
    <property type="protein sequence ID" value="AAD25662.2"/>
    <property type="molecule type" value="Genomic_DNA"/>
</dbReference>
<dbReference type="EMBL" id="CP002685">
    <property type="protein sequence ID" value="AEC09805.1"/>
    <property type="molecule type" value="Genomic_DNA"/>
</dbReference>
<dbReference type="EMBL" id="AY091778">
    <property type="protein sequence ID" value="AAM10326.1"/>
    <property type="molecule type" value="mRNA"/>
</dbReference>
<dbReference type="EMBL" id="AY149959">
    <property type="protein sequence ID" value="AAN31113.1"/>
    <property type="molecule type" value="mRNA"/>
</dbReference>
<dbReference type="EMBL" id="BX820203">
    <property type="status" value="NOT_ANNOTATED_CDS"/>
    <property type="molecule type" value="mRNA"/>
</dbReference>
<dbReference type="PIR" id="D84827">
    <property type="entry name" value="D84827"/>
</dbReference>
<dbReference type="RefSeq" id="NP_565925.1">
    <molecule id="Q9SIZ4-1"/>
    <property type="nucleotide sequence ID" value="NM_129585.5"/>
</dbReference>
<dbReference type="SMR" id="Q9SIZ4"/>
<dbReference type="BioGRID" id="3957">
    <property type="interactions" value="5"/>
</dbReference>
<dbReference type="FunCoup" id="Q9SIZ4">
    <property type="interactions" value="123"/>
</dbReference>
<dbReference type="IntAct" id="Q9SIZ4">
    <property type="interactions" value="5"/>
</dbReference>
<dbReference type="STRING" id="3702.Q9SIZ4"/>
<dbReference type="iPTMnet" id="Q9SIZ4"/>
<dbReference type="PaxDb" id="3702-AT2G40270.1"/>
<dbReference type="ProteomicsDB" id="242596">
    <molecule id="Q9SIZ4-1"/>
</dbReference>
<dbReference type="EnsemblPlants" id="AT2G40270.1">
    <molecule id="Q9SIZ4-1"/>
    <property type="protein sequence ID" value="AT2G40270.1"/>
    <property type="gene ID" value="AT2G40270"/>
</dbReference>
<dbReference type="GeneID" id="818619"/>
<dbReference type="Gramene" id="AT2G40270.1">
    <molecule id="Q9SIZ4-1"/>
    <property type="protein sequence ID" value="AT2G40270.1"/>
    <property type="gene ID" value="AT2G40270"/>
</dbReference>
<dbReference type="KEGG" id="ath:AT2G40270"/>
<dbReference type="Araport" id="AT2G40270"/>
<dbReference type="TAIR" id="AT2G40270"/>
<dbReference type="eggNOG" id="KOG1187">
    <property type="taxonomic scope" value="Eukaryota"/>
</dbReference>
<dbReference type="InParanoid" id="Q9SIZ4"/>
<dbReference type="PhylomeDB" id="Q9SIZ4"/>
<dbReference type="PRO" id="PR:Q9SIZ4"/>
<dbReference type="Proteomes" id="UP000006548">
    <property type="component" value="Chromosome 2"/>
</dbReference>
<dbReference type="ExpressionAtlas" id="Q9SIZ4">
    <property type="expression patterns" value="baseline and differential"/>
</dbReference>
<dbReference type="GO" id="GO:0005886">
    <property type="term" value="C:plasma membrane"/>
    <property type="evidence" value="ECO:0007669"/>
    <property type="project" value="UniProtKB-SubCell"/>
</dbReference>
<dbReference type="GO" id="GO:0005524">
    <property type="term" value="F:ATP binding"/>
    <property type="evidence" value="ECO:0007669"/>
    <property type="project" value="InterPro"/>
</dbReference>
<dbReference type="GO" id="GO:0004672">
    <property type="term" value="F:protein kinase activity"/>
    <property type="evidence" value="ECO:0007669"/>
    <property type="project" value="InterPro"/>
</dbReference>
<dbReference type="FunFam" id="3.30.200.20:FF:000489">
    <property type="entry name" value="Inactive receptor-like serine/threonine-protein kinase"/>
    <property type="match status" value="1"/>
</dbReference>
<dbReference type="FunFam" id="1.10.510.10:FF:000950">
    <property type="entry name" value="Inactive receptor-like serine/threonine-protein kinase At2g40270"/>
    <property type="match status" value="1"/>
</dbReference>
<dbReference type="Gene3D" id="3.30.200.20">
    <property type="entry name" value="Phosphorylase Kinase, domain 1"/>
    <property type="match status" value="1"/>
</dbReference>
<dbReference type="Gene3D" id="1.10.510.10">
    <property type="entry name" value="Transferase(Phosphotransferase) domain 1"/>
    <property type="match status" value="1"/>
</dbReference>
<dbReference type="InterPro" id="IPR011009">
    <property type="entry name" value="Kinase-like_dom_sf"/>
</dbReference>
<dbReference type="InterPro" id="IPR000719">
    <property type="entry name" value="Prot_kinase_dom"/>
</dbReference>
<dbReference type="InterPro" id="IPR001245">
    <property type="entry name" value="Ser-Thr/Tyr_kinase_cat_dom"/>
</dbReference>
<dbReference type="PANTHER" id="PTHR46084:SF8">
    <property type="entry name" value="PROTEIN KINASE DOMAIN-CONTAINING PROTEIN"/>
    <property type="match status" value="1"/>
</dbReference>
<dbReference type="PANTHER" id="PTHR46084">
    <property type="entry name" value="PROTEIN MALE DISCOVERER 2"/>
    <property type="match status" value="1"/>
</dbReference>
<dbReference type="Pfam" id="PF07714">
    <property type="entry name" value="PK_Tyr_Ser-Thr"/>
    <property type="match status" value="1"/>
</dbReference>
<dbReference type="SUPFAM" id="SSF56112">
    <property type="entry name" value="Protein kinase-like (PK-like)"/>
    <property type="match status" value="1"/>
</dbReference>
<dbReference type="PROSITE" id="PS50011">
    <property type="entry name" value="PROTEIN_KINASE_DOM"/>
    <property type="match status" value="1"/>
</dbReference>